<sequence length="44" mass="5050">MKRTFQPSNLVRARRHGFRARMATKGGRLVLNARRAKGRKKLSA</sequence>
<evidence type="ECO:0000255" key="1">
    <source>
        <dbReference type="HAMAP-Rule" id="MF_00391"/>
    </source>
</evidence>
<evidence type="ECO:0000305" key="2"/>
<proteinExistence type="inferred from homology"/>
<feature type="chain" id="PRO_1000013427" description="Large ribosomal subunit protein bL34">
    <location>
        <begin position="1"/>
        <end position="44"/>
    </location>
</feature>
<keyword id="KW-0687">Ribonucleoprotein</keyword>
<keyword id="KW-0689">Ribosomal protein</keyword>
<protein>
    <recommendedName>
        <fullName evidence="1">Large ribosomal subunit protein bL34</fullName>
    </recommendedName>
    <alternativeName>
        <fullName evidence="2">50S ribosomal protein L34</fullName>
    </alternativeName>
</protein>
<comment type="similarity">
    <text evidence="1">Belongs to the bacterial ribosomal protein bL34 family.</text>
</comment>
<accession>A4WNL8</accession>
<organism>
    <name type="scientific">Cereibacter sphaeroides (strain ATCC 17025 / ATH 2.4.3)</name>
    <name type="common">Rhodobacter sphaeroides</name>
    <dbReference type="NCBI Taxonomy" id="349102"/>
    <lineage>
        <taxon>Bacteria</taxon>
        <taxon>Pseudomonadati</taxon>
        <taxon>Pseudomonadota</taxon>
        <taxon>Alphaproteobacteria</taxon>
        <taxon>Rhodobacterales</taxon>
        <taxon>Paracoccaceae</taxon>
        <taxon>Cereibacter</taxon>
    </lineage>
</organism>
<reference key="1">
    <citation type="submission" date="2007-04" db="EMBL/GenBank/DDBJ databases">
        <title>Complete sequence of chromosome of Rhodobacter sphaeroides ATCC 17025.</title>
        <authorList>
            <consortium name="US DOE Joint Genome Institute"/>
            <person name="Copeland A."/>
            <person name="Lucas S."/>
            <person name="Lapidus A."/>
            <person name="Barry K."/>
            <person name="Detter J.C."/>
            <person name="Glavina del Rio T."/>
            <person name="Hammon N."/>
            <person name="Israni S."/>
            <person name="Dalin E."/>
            <person name="Tice H."/>
            <person name="Pitluck S."/>
            <person name="Chertkov O."/>
            <person name="Brettin T."/>
            <person name="Bruce D."/>
            <person name="Han C."/>
            <person name="Schmutz J."/>
            <person name="Larimer F."/>
            <person name="Land M."/>
            <person name="Hauser L."/>
            <person name="Kyrpides N."/>
            <person name="Kim E."/>
            <person name="Richardson P."/>
            <person name="Mackenzie C."/>
            <person name="Choudhary M."/>
            <person name="Donohue T.J."/>
            <person name="Kaplan S."/>
        </authorList>
    </citation>
    <scope>NUCLEOTIDE SEQUENCE [LARGE SCALE GENOMIC DNA]</scope>
    <source>
        <strain>ATCC 17025 / ATH 2.4.3</strain>
    </source>
</reference>
<name>RL34_CERS5</name>
<gene>
    <name evidence="1" type="primary">rpmH</name>
    <name type="ordered locus">Rsph17025_0070</name>
</gene>
<dbReference type="EMBL" id="CP000661">
    <property type="protein sequence ID" value="ABP68982.1"/>
    <property type="molecule type" value="Genomic_DNA"/>
</dbReference>
<dbReference type="SMR" id="A4WNL8"/>
<dbReference type="STRING" id="349102.Rsph17025_0070"/>
<dbReference type="KEGG" id="rsq:Rsph17025_0070"/>
<dbReference type="eggNOG" id="COG0230">
    <property type="taxonomic scope" value="Bacteria"/>
</dbReference>
<dbReference type="HOGENOM" id="CLU_129938_2_1_5"/>
<dbReference type="BioCyc" id="RSPH349102:G1G8M-69-MONOMER"/>
<dbReference type="GO" id="GO:1990904">
    <property type="term" value="C:ribonucleoprotein complex"/>
    <property type="evidence" value="ECO:0007669"/>
    <property type="project" value="UniProtKB-KW"/>
</dbReference>
<dbReference type="GO" id="GO:0005840">
    <property type="term" value="C:ribosome"/>
    <property type="evidence" value="ECO:0007669"/>
    <property type="project" value="UniProtKB-KW"/>
</dbReference>
<dbReference type="GO" id="GO:0003735">
    <property type="term" value="F:structural constituent of ribosome"/>
    <property type="evidence" value="ECO:0007669"/>
    <property type="project" value="InterPro"/>
</dbReference>
<dbReference type="GO" id="GO:0006412">
    <property type="term" value="P:translation"/>
    <property type="evidence" value="ECO:0007669"/>
    <property type="project" value="UniProtKB-UniRule"/>
</dbReference>
<dbReference type="FunFam" id="1.10.287.3980:FF:000001">
    <property type="entry name" value="Mitochondrial ribosomal protein L34"/>
    <property type="match status" value="1"/>
</dbReference>
<dbReference type="Gene3D" id="1.10.287.3980">
    <property type="match status" value="1"/>
</dbReference>
<dbReference type="HAMAP" id="MF_00391">
    <property type="entry name" value="Ribosomal_bL34"/>
    <property type="match status" value="1"/>
</dbReference>
<dbReference type="InterPro" id="IPR000271">
    <property type="entry name" value="Ribosomal_bL34"/>
</dbReference>
<dbReference type="InterPro" id="IPR020939">
    <property type="entry name" value="Ribosomal_bL34_CS"/>
</dbReference>
<dbReference type="NCBIfam" id="TIGR01030">
    <property type="entry name" value="rpmH_bact"/>
    <property type="match status" value="1"/>
</dbReference>
<dbReference type="PANTHER" id="PTHR14503:SF4">
    <property type="entry name" value="LARGE RIBOSOMAL SUBUNIT PROTEIN BL34M"/>
    <property type="match status" value="1"/>
</dbReference>
<dbReference type="PANTHER" id="PTHR14503">
    <property type="entry name" value="MITOCHONDRIAL RIBOSOMAL PROTEIN 34 FAMILY MEMBER"/>
    <property type="match status" value="1"/>
</dbReference>
<dbReference type="Pfam" id="PF00468">
    <property type="entry name" value="Ribosomal_L34"/>
    <property type="match status" value="1"/>
</dbReference>
<dbReference type="PROSITE" id="PS00784">
    <property type="entry name" value="RIBOSOMAL_L34"/>
    <property type="match status" value="1"/>
</dbReference>